<dbReference type="EMBL" id="AK020148">
    <property type="protein sequence ID" value="BAB32012.3"/>
    <property type="molecule type" value="mRNA"/>
</dbReference>
<dbReference type="EMBL" id="AK031338">
    <property type="protein sequence ID" value="BAC27353.1"/>
    <property type="molecule type" value="mRNA"/>
</dbReference>
<dbReference type="EMBL" id="AK041715">
    <property type="protein sequence ID" value="BAC31039.1"/>
    <property type="molecule type" value="mRNA"/>
</dbReference>
<dbReference type="EMBL" id="BC038386">
    <property type="protein sequence ID" value="AAH38386.1"/>
    <property type="molecule type" value="mRNA"/>
</dbReference>
<dbReference type="EMBL" id="AL773523">
    <property type="protein sequence ID" value="CAM16866.1"/>
    <property type="molecule type" value="Genomic_DNA"/>
</dbReference>
<dbReference type="EMBL" id="AL845534">
    <property type="protein sequence ID" value="CAM16866.1"/>
    <property type="status" value="JOINED"/>
    <property type="molecule type" value="Genomic_DNA"/>
</dbReference>
<dbReference type="EMBL" id="AL773523">
    <property type="protein sequence ID" value="CAM16867.1"/>
    <property type="molecule type" value="Genomic_DNA"/>
</dbReference>
<dbReference type="EMBL" id="AL845534">
    <property type="protein sequence ID" value="CAM16867.1"/>
    <property type="status" value="JOINED"/>
    <property type="molecule type" value="Genomic_DNA"/>
</dbReference>
<dbReference type="EMBL" id="AL773523">
    <property type="protein sequence ID" value="CAM16870.1"/>
    <property type="molecule type" value="Genomic_DNA"/>
</dbReference>
<dbReference type="EMBL" id="AL845534">
    <property type="protein sequence ID" value="CAM16870.1"/>
    <property type="status" value="JOINED"/>
    <property type="molecule type" value="Genomic_DNA"/>
</dbReference>
<dbReference type="EMBL" id="AL845534">
    <property type="protein sequence ID" value="CAM17903.1"/>
    <property type="molecule type" value="Genomic_DNA"/>
</dbReference>
<dbReference type="EMBL" id="AL773523">
    <property type="protein sequence ID" value="CAM17903.1"/>
    <property type="status" value="JOINED"/>
    <property type="molecule type" value="Genomic_DNA"/>
</dbReference>
<dbReference type="EMBL" id="AL845534">
    <property type="protein sequence ID" value="CAM17904.1"/>
    <property type="molecule type" value="Genomic_DNA"/>
</dbReference>
<dbReference type="EMBL" id="AL845534">
    <property type="protein sequence ID" value="CAM17906.1"/>
    <property type="status" value="ALT_SEQ"/>
    <property type="molecule type" value="Genomic_DNA"/>
</dbReference>
<dbReference type="EMBL" id="AL773523">
    <property type="protein sequence ID" value="CAM17906.1"/>
    <property type="status" value="JOINED"/>
    <property type="molecule type" value="Genomic_DNA"/>
</dbReference>
<dbReference type="EMBL" id="AL845534">
    <property type="protein sequence ID" value="CAM17908.1"/>
    <property type="status" value="ALT_SEQ"/>
    <property type="molecule type" value="Genomic_DNA"/>
</dbReference>
<dbReference type="EMBL" id="AL773523">
    <property type="protein sequence ID" value="CAM17908.1"/>
    <property type="status" value="JOINED"/>
    <property type="molecule type" value="Genomic_DNA"/>
</dbReference>
<dbReference type="EMBL" id="AK131139">
    <property type="protein sequence ID" value="BAD21389.1"/>
    <property type="molecule type" value="mRNA"/>
</dbReference>
<dbReference type="RefSeq" id="NP_001366203.1">
    <molecule id="A2AL36-1"/>
    <property type="nucleotide sequence ID" value="NM_001379274.1"/>
</dbReference>
<dbReference type="RefSeq" id="XP_006498131.1">
    <property type="nucleotide sequence ID" value="XM_006498068.2"/>
</dbReference>
<dbReference type="SMR" id="A2AL36"/>
<dbReference type="BioGRID" id="205064">
    <property type="interactions" value="4"/>
</dbReference>
<dbReference type="FunCoup" id="A2AL36">
    <property type="interactions" value="1397"/>
</dbReference>
<dbReference type="IntAct" id="A2AL36">
    <property type="interactions" value="4"/>
</dbReference>
<dbReference type="STRING" id="10090.ENSMUSP00000108655"/>
<dbReference type="iPTMnet" id="A2AL36"/>
<dbReference type="PhosphoSitePlus" id="A2AL36"/>
<dbReference type="PaxDb" id="10090-ENSMUSP00000028237"/>
<dbReference type="PeptideAtlas" id="A2AL36"/>
<dbReference type="ProteomicsDB" id="283589">
    <molecule id="A2AL36-1"/>
</dbReference>
<dbReference type="ProteomicsDB" id="283590">
    <molecule id="A2AL36-2"/>
</dbReference>
<dbReference type="Antibodypedia" id="30137">
    <property type="antibodies" value="35 antibodies from 13 providers"/>
</dbReference>
<dbReference type="Ensembl" id="ENSMUST00000028235.11">
    <molecule id="A2AL36-2"/>
    <property type="protein sequence ID" value="ENSMUSP00000028235.5"/>
    <property type="gene ID" value="ENSMUSG00000057110.16"/>
</dbReference>
<dbReference type="Ensembl" id="ENSMUST00000028237.15">
    <molecule id="A2AL36-1"/>
    <property type="protein sequence ID" value="ENSMUSP00000028237.9"/>
    <property type="gene ID" value="ENSMUSG00000057110.16"/>
</dbReference>
<dbReference type="Ensembl" id="ENSMUST00000156933.8">
    <molecule id="A2AL36-1"/>
    <property type="protein sequence ID" value="ENSMUSP00000118731.3"/>
    <property type="gene ID" value="ENSMUSG00000057110.16"/>
</dbReference>
<dbReference type="GeneID" id="26920"/>
<dbReference type="UCSC" id="uc008jjr.2">
    <molecule id="A2AL36-1"/>
    <property type="organism name" value="mouse"/>
</dbReference>
<dbReference type="UCSC" id="uc008jjs.2">
    <molecule id="A2AL36-2"/>
    <property type="organism name" value="mouse"/>
</dbReference>
<dbReference type="AGR" id="MGI:1889576"/>
<dbReference type="MGI" id="MGI:1889576">
    <property type="gene designation" value="Cntrl"/>
</dbReference>
<dbReference type="VEuPathDB" id="HostDB:ENSMUSG00000057110"/>
<dbReference type="eggNOG" id="KOG0531">
    <property type="taxonomic scope" value="Eukaryota"/>
</dbReference>
<dbReference type="GeneTree" id="ENSGT00940000155434"/>
<dbReference type="HOGENOM" id="CLU_595226_0_0_1"/>
<dbReference type="InParanoid" id="A2AL36"/>
<dbReference type="OrthoDB" id="433501at2759"/>
<dbReference type="PhylomeDB" id="A2AL36"/>
<dbReference type="TreeFam" id="TF101135"/>
<dbReference type="BioGRID-ORCS" id="26920">
    <property type="hits" value="0 hits in 62 CRISPR screens"/>
</dbReference>
<dbReference type="CD-CODE" id="01CA17F3">
    <property type="entry name" value="Centrosome"/>
</dbReference>
<dbReference type="ChiTaRS" id="Cntrl">
    <property type="organism name" value="mouse"/>
</dbReference>
<dbReference type="PRO" id="PR:A2AL36"/>
<dbReference type="Proteomes" id="UP000000589">
    <property type="component" value="Chromosome 2"/>
</dbReference>
<dbReference type="RNAct" id="A2AL36">
    <property type="molecule type" value="protein"/>
</dbReference>
<dbReference type="Bgee" id="ENSMUSG00000057110">
    <property type="expression patterns" value="Expressed in undifferentiated genital tubercle and 194 other cell types or tissues"/>
</dbReference>
<dbReference type="ExpressionAtlas" id="A2AL36">
    <property type="expression patterns" value="baseline and differential"/>
</dbReference>
<dbReference type="GO" id="GO:0034451">
    <property type="term" value="C:centriolar satellite"/>
    <property type="evidence" value="ECO:0007669"/>
    <property type="project" value="Ensembl"/>
</dbReference>
<dbReference type="GO" id="GO:0120103">
    <property type="term" value="C:centriolar subdistal appendage"/>
    <property type="evidence" value="ECO:0007669"/>
    <property type="project" value="Ensembl"/>
</dbReference>
<dbReference type="GO" id="GO:0005813">
    <property type="term" value="C:centrosome"/>
    <property type="evidence" value="ECO:0000266"/>
    <property type="project" value="MGI"/>
</dbReference>
<dbReference type="GO" id="GO:0036064">
    <property type="term" value="C:ciliary basal body"/>
    <property type="evidence" value="ECO:0007669"/>
    <property type="project" value="Ensembl"/>
</dbReference>
<dbReference type="GO" id="GO:0005829">
    <property type="term" value="C:cytosol"/>
    <property type="evidence" value="ECO:0007669"/>
    <property type="project" value="Ensembl"/>
</dbReference>
<dbReference type="GO" id="GO:0090543">
    <property type="term" value="C:Flemming body"/>
    <property type="evidence" value="ECO:0007669"/>
    <property type="project" value="UniProtKB-SubCell"/>
</dbReference>
<dbReference type="GO" id="GO:0005794">
    <property type="term" value="C:Golgi apparatus"/>
    <property type="evidence" value="ECO:0007669"/>
    <property type="project" value="Ensembl"/>
</dbReference>
<dbReference type="GO" id="GO:0072687">
    <property type="term" value="C:meiotic spindle"/>
    <property type="evidence" value="ECO:0000314"/>
    <property type="project" value="MGI"/>
</dbReference>
<dbReference type="GO" id="GO:0090619">
    <property type="term" value="C:meiotic spindle pole"/>
    <property type="evidence" value="ECO:0000314"/>
    <property type="project" value="MGI"/>
</dbReference>
<dbReference type="GO" id="GO:0097431">
    <property type="term" value="C:mitotic spindle pole"/>
    <property type="evidence" value="ECO:0000314"/>
    <property type="project" value="MGI"/>
</dbReference>
<dbReference type="GO" id="GO:0048471">
    <property type="term" value="C:perinuclear region of cytoplasm"/>
    <property type="evidence" value="ECO:0000314"/>
    <property type="project" value="MGI"/>
</dbReference>
<dbReference type="GO" id="GO:0005886">
    <property type="term" value="C:plasma membrane"/>
    <property type="evidence" value="ECO:0007669"/>
    <property type="project" value="Ensembl"/>
</dbReference>
<dbReference type="GO" id="GO:0035904">
    <property type="term" value="P:aorta development"/>
    <property type="evidence" value="ECO:0000315"/>
    <property type="project" value="MGI"/>
</dbReference>
<dbReference type="GO" id="GO:0003279">
    <property type="term" value="P:cardiac septum development"/>
    <property type="evidence" value="ECO:0000315"/>
    <property type="project" value="MGI"/>
</dbReference>
<dbReference type="GO" id="GO:0060976">
    <property type="term" value="P:coronary vasculature development"/>
    <property type="evidence" value="ECO:0000315"/>
    <property type="project" value="MGI"/>
</dbReference>
<dbReference type="GO" id="GO:0048132">
    <property type="term" value="P:female germ-line stem cell asymmetric division"/>
    <property type="evidence" value="ECO:0000315"/>
    <property type="project" value="MGI"/>
</dbReference>
<dbReference type="GO" id="GO:0001822">
    <property type="term" value="P:kidney development"/>
    <property type="evidence" value="ECO:0000315"/>
    <property type="project" value="MGI"/>
</dbReference>
<dbReference type="GO" id="GO:0003281">
    <property type="term" value="P:ventricular septum development"/>
    <property type="evidence" value="ECO:0000315"/>
    <property type="project" value="MGI"/>
</dbReference>
<dbReference type="FunFam" id="3.80.10.10:FF:000153">
    <property type="entry name" value="centriolin isoform X1"/>
    <property type="match status" value="1"/>
</dbReference>
<dbReference type="FunFam" id="3.80.10.10:FF:000139">
    <property type="entry name" value="centriolin isoform X2"/>
    <property type="match status" value="1"/>
</dbReference>
<dbReference type="Gene3D" id="3.80.10.10">
    <property type="entry name" value="Ribonuclease Inhibitor"/>
    <property type="match status" value="2"/>
</dbReference>
<dbReference type="InterPro" id="IPR001611">
    <property type="entry name" value="Leu-rich_rpt"/>
</dbReference>
<dbReference type="InterPro" id="IPR003591">
    <property type="entry name" value="Leu-rich_rpt_typical-subtyp"/>
</dbReference>
<dbReference type="InterPro" id="IPR032675">
    <property type="entry name" value="LRR_dom_sf"/>
</dbReference>
<dbReference type="InterPro" id="IPR050836">
    <property type="entry name" value="SDS22/Internalin_LRR"/>
</dbReference>
<dbReference type="PANTHER" id="PTHR46652">
    <property type="entry name" value="LEUCINE-RICH REPEAT AND IQ DOMAIN-CONTAINING PROTEIN 1-RELATED"/>
    <property type="match status" value="1"/>
</dbReference>
<dbReference type="PANTHER" id="PTHR46652:SF3">
    <property type="entry name" value="LEUCINE-RICH REPEAT-CONTAINING PROTEIN 9"/>
    <property type="match status" value="1"/>
</dbReference>
<dbReference type="Pfam" id="PF14580">
    <property type="entry name" value="LRR_9"/>
    <property type="match status" value="1"/>
</dbReference>
<dbReference type="SMART" id="SM00365">
    <property type="entry name" value="LRR_SD22"/>
    <property type="match status" value="3"/>
</dbReference>
<dbReference type="SMART" id="SM00369">
    <property type="entry name" value="LRR_TYP"/>
    <property type="match status" value="3"/>
</dbReference>
<dbReference type="SUPFAM" id="SSF52058">
    <property type="entry name" value="L domain-like"/>
    <property type="match status" value="1"/>
</dbReference>
<dbReference type="PROSITE" id="PS51450">
    <property type="entry name" value="LRR"/>
    <property type="match status" value="4"/>
</dbReference>
<name>CNTRL_MOUSE</name>
<accession>A2AL36</accession>
<accession>A0A4W6</accession>
<accession>A0A4X1</accession>
<accession>A2AL37</accession>
<accession>A2AL40</accession>
<accession>Q6KAR8</accession>
<accession>Q8CHX3</accession>
<accession>Q9CRM3</accession>
<proteinExistence type="evidence at protein level"/>
<gene>
    <name type="primary">Cntrl</name>
    <name type="synonym">Cep1</name>
    <name type="synonym">Cep110</name>
</gene>
<sequence length="2334" mass="268880">MKKGSERRLSKAKMPLSSHFPGPSSLRSSMRSRSLSPLIGSETQPLHPGGQWPAQAELTDESTVPLEPQQRKGAESYVGVRYITEALIKKLTKQDNLALVKSLNLSLSKDGGKKFRYIENLEKCVKLEVLNLSYNLIVKIEKVDKLLRLRELNLSYNKISKIEGLENMCNLQKLNLAGNEIEHIPVWFAKKLKSLRVLNLKGNKISSLQDVSKLKPLQDLTSLVLIDNPVVALPHYLQFIIFHLRSLESLEGQPVTTQDRQEAFERFSLEEIERLEKDLEKKTVETEELKNKQTKFLEEIKNQDKLNKSLKEEAMLQKQSCEELESDLSTKKELLKQKTVELTRACQKQYELEQELAFYKIDAKFEPLNYYPSEYAEIDKYPDESPYIGKSRYKRNMFATETYIVSDAQAVQIRKMVPEGGQLRHEHTPPRVQAPPDLQLEDTEKKISAAQTRLSELHHEIETAEQKVLRATQEFKQLEEAIQQKKISEAEKDLLLKQLSGRLQHLNRLRQEALDLEIQMEKQRKEIAEKHEEINTVQLATDSLDPKDPKHSHMKAQKRGKEQQLDIMNRQYTQLESRLDEILCRIAKETEEIKDLEQQLTDGQIAANEALKKDLEGVISGLQEYLGTIKGQATQAQNECRKLQDEKETLLQRLTEVQQEKEELELIAMDAENMRKELAELESALQEQHEVNASLQQAQGDLSAYETELETQLKLKDAETSQLKQELEKLLRRTQLEQSVLQTELEKERESLRDALGKAQSSEEKQQENNELRTQLKQLQDDNSLLKKQLKEFQNHLNHVVDGLIHPEEVAARVDELRKRLKLGAGEMRIHSPSDVLGKSLADLQKQFSEILARSQWEKEEAQVRERKLHEEMALQQEKLANGQEEFRQACERALEARIKFDKRQHNARIQQLENEIHYLQENLKSMEKIQGLTDLQLQEADEEKERILAQLQELEKKKKREDARSQEQFLGLDEELKSLKKAVAASDKLAAAELTIAKDQLKSLHGTVVRINQERAEELQEAERFSREAMQAAKDLSRAEAEIELLQHLLREREGQFRDEMENADLGAKGANSQLLEIEALNEAMAKQRAEITRLRDVLNLTGAGTKGGIENVLEEIAELRHAVSAQNEYISSMADPFRRQGWWYFMPPAPSSKVSSHSSQATKDSGLGLKYTASTPLRKPQPGQQEEKDSSGPLPASGYWVYSPIRSTLHKSFSKREDADSGGDSQEESGLDDQEEPPFVPPPGYIMYTVLPDGSPVPQGVALYAPSPPLPNSSHPLTPGTVVYGPPPAGAPIIYGPPPANFAVPLVPAGVQHCNIPEHHNLENEVSRLEDIMQHLKSKQREERRQKASTQHSEEEVDGLHRDIDDLLQEKKELELEVEELHRTIERHQQRKDFIDGHVENLMTELEIEKSLKHHEDIVDEIECLEKTLLKRRSELREADRLLAEAENELACTKEKTKSAVEKFTDAKRNLLQTESDAEALEKRAQETALNLVKAEQQLRLLQADAEDLEQHKIKQEEILKEINKVVAAKDADFQCLNEKKEKLTEELQSLQRDIKAAQHSEDHHLQVLRESETLLQAKRAELETLKSQVTSQQQELAVLDSELGHRREELLLLQDSLAQAKADLQEALTLGETEVAEKCSHIREVKSLLEELSFQKGELNVHISEKKTQLALIQQEMEKEEKNLQVVLQQLSRHKTELKNVADILQLETSELQGLKLQHDQKVVELEKAQVDVLEEKLELENLQQATQQQRRELERQRQLLERDRRETERVRAESQALQSCVECLSKEKEDLQGQCESWEKKSSHAQRVLAATEESNKMEQSNLGKLELSVRKLRQELEQLSQDKLALHSEVAEVQQQLQGKQEAINSLQEELDSTQDHLDLAKQDLIHTTKCQNELLNEQTQLQEDISKWMARLESCQKETETKEQQVQQLQDEIRESKLRLDQQEMMFQKLQKEREREEQKFEAGKVTLEQQQRQLEKELTDQKSRLKQLLTDVSAAEGRLGTLQEEERRIEGLERMLSQAKQQLSEREQQLMAKSGELLALQKEADDMRADFSLLRNQFLTERKKAEKQVAGLKEALKIQRSQLEKNLLEQKQENSCMQKEMATIELVAQDNHERARRLMKELSQMQQEYLELKKQVANQKDLERRQMEVSDAMRTLKSEVKDEIRTSLRNLNQFLPELPADLASILERNENLRELESLKENFPFTTKERIFEEKSNFPQVHIMDEHWRGEALRQRLRRHEDQLKAQLRHCMSKQAEVLIKGKQQTEGTLHSLRRQVDALGELVTSTSTDSASSPSLPSLVEDSQHGHSQSSFQVLQVPLEEPNSYRH</sequence>
<organism>
    <name type="scientific">Mus musculus</name>
    <name type="common">Mouse</name>
    <dbReference type="NCBI Taxonomy" id="10090"/>
    <lineage>
        <taxon>Eukaryota</taxon>
        <taxon>Metazoa</taxon>
        <taxon>Chordata</taxon>
        <taxon>Craniata</taxon>
        <taxon>Vertebrata</taxon>
        <taxon>Euteleostomi</taxon>
        <taxon>Mammalia</taxon>
        <taxon>Eutheria</taxon>
        <taxon>Euarchontoglires</taxon>
        <taxon>Glires</taxon>
        <taxon>Rodentia</taxon>
        <taxon>Myomorpha</taxon>
        <taxon>Muroidea</taxon>
        <taxon>Muridae</taxon>
        <taxon>Murinae</taxon>
        <taxon>Mus</taxon>
        <taxon>Mus</taxon>
    </lineage>
</organism>
<protein>
    <recommendedName>
        <fullName>Centriolin</fullName>
    </recommendedName>
    <alternativeName>
        <fullName>Centrosomal protein 1</fullName>
    </alternativeName>
    <alternativeName>
        <fullName>Centrosomal protein of 110 kDa</fullName>
        <shortName>Cep110</shortName>
    </alternativeName>
</protein>
<feature type="chain" id="PRO_0000323676" description="Centriolin">
    <location>
        <begin position="1"/>
        <end position="2334"/>
    </location>
</feature>
<feature type="repeat" description="LRR 1">
    <location>
        <begin position="126"/>
        <end position="147"/>
    </location>
</feature>
<feature type="repeat" description="LRR 2">
    <location>
        <begin position="148"/>
        <end position="169"/>
    </location>
</feature>
<feature type="repeat" description="LRR 3">
    <location>
        <begin position="170"/>
        <end position="191"/>
    </location>
</feature>
<feature type="repeat" description="LRR 4">
    <location>
        <begin position="194"/>
        <end position="215"/>
    </location>
</feature>
<feature type="domain" description="LRRCT">
    <location>
        <begin position="228"/>
        <end position="266"/>
    </location>
</feature>
<feature type="region of interest" description="Disordered" evidence="4">
    <location>
        <begin position="1"/>
        <end position="70"/>
    </location>
</feature>
<feature type="region of interest" description="Disordered" evidence="4">
    <location>
        <begin position="542"/>
        <end position="562"/>
    </location>
</feature>
<feature type="region of interest" description="Disordered" evidence="4">
    <location>
        <begin position="751"/>
        <end position="771"/>
    </location>
</feature>
<feature type="region of interest" description="Disordered" evidence="4">
    <location>
        <begin position="1154"/>
        <end position="1198"/>
    </location>
</feature>
<feature type="region of interest" description="Disordered" evidence="4">
    <location>
        <begin position="1213"/>
        <end position="1245"/>
    </location>
</feature>
<feature type="region of interest" description="Disordered" evidence="4">
    <location>
        <begin position="1338"/>
        <end position="1360"/>
    </location>
</feature>
<feature type="region of interest" description="Required for centrosome localization" evidence="1">
    <location>
        <begin position="1951"/>
        <end position="2121"/>
    </location>
</feature>
<feature type="region of interest" description="Sufficient for interaction with HOOK2" evidence="1">
    <location>
        <begin position="1988"/>
        <end position="2334"/>
    </location>
</feature>
<feature type="region of interest" description="Disordered" evidence="4">
    <location>
        <begin position="2291"/>
        <end position="2334"/>
    </location>
</feature>
<feature type="coiled-coil region" evidence="3">
    <location>
        <begin position="265"/>
        <end position="343"/>
    </location>
</feature>
<feature type="coiled-coil region" evidence="3">
    <location>
        <begin position="437"/>
        <end position="800"/>
    </location>
</feature>
<feature type="coiled-coil region" evidence="3">
    <location>
        <begin position="858"/>
        <end position="1102"/>
    </location>
</feature>
<feature type="coiled-coil region" evidence="3">
    <location>
        <begin position="1320"/>
        <end position="2169"/>
    </location>
</feature>
<feature type="compositionally biased region" description="Low complexity" evidence="4">
    <location>
        <begin position="21"/>
        <end position="38"/>
    </location>
</feature>
<feature type="compositionally biased region" description="Acidic residues" evidence="4">
    <location>
        <begin position="1227"/>
        <end position="1238"/>
    </location>
</feature>
<feature type="compositionally biased region" description="Low complexity" evidence="4">
    <location>
        <begin position="2291"/>
        <end position="2307"/>
    </location>
</feature>
<feature type="modified residue" description="Phosphoserine" evidence="9">
    <location>
        <position position="832"/>
    </location>
</feature>
<feature type="modified residue" description="Phosphoserine" evidence="2">
    <location>
        <position position="1478"/>
    </location>
</feature>
<feature type="splice variant" id="VSP_032051" description="In isoform 2." evidence="6 7">
    <original>SHMKAQKR</original>
    <variation>VSKMGNLD</variation>
    <location>
        <begin position="552"/>
        <end position="559"/>
    </location>
</feature>
<feature type="splice variant" id="VSP_032052" description="In isoform 2." evidence="6 7">
    <location>
        <begin position="560"/>
        <end position="2334"/>
    </location>
</feature>
<feature type="sequence conflict" description="In Ref. 2; AAH38386." evidence="8" ref="2">
    <original>R</original>
    <variation>K</variation>
    <location>
        <position position="8"/>
    </location>
</feature>
<feature type="sequence conflict" description="In Ref. 1; BAB32012." evidence="8" ref="1">
    <original>C</original>
    <variation>G</variation>
    <location>
        <position position="169"/>
    </location>
</feature>
<feature type="sequence conflict" description="In Ref. 4; BAD21389." evidence="8" ref="4">
    <location>
        <position position="1219"/>
    </location>
</feature>
<keyword id="KW-0025">Alternative splicing</keyword>
<keyword id="KW-0131">Cell cycle</keyword>
<keyword id="KW-0132">Cell division</keyword>
<keyword id="KW-0175">Coiled coil</keyword>
<keyword id="KW-0963">Cytoplasm</keyword>
<keyword id="KW-0206">Cytoskeleton</keyword>
<keyword id="KW-0433">Leucine-rich repeat</keyword>
<keyword id="KW-0597">Phosphoprotein</keyword>
<keyword id="KW-1185">Reference proteome</keyword>
<keyword id="KW-0677">Repeat</keyword>
<evidence type="ECO:0000250" key="1"/>
<evidence type="ECO:0000250" key="2">
    <source>
        <dbReference type="UniProtKB" id="Q7Z7A1"/>
    </source>
</evidence>
<evidence type="ECO:0000255" key="3"/>
<evidence type="ECO:0000256" key="4">
    <source>
        <dbReference type="SAM" id="MobiDB-lite"/>
    </source>
</evidence>
<evidence type="ECO:0000269" key="5">
    <source>
    </source>
</evidence>
<evidence type="ECO:0000303" key="6">
    <source>
    </source>
</evidence>
<evidence type="ECO:0000303" key="7">
    <source>
    </source>
</evidence>
<evidence type="ECO:0000305" key="8"/>
<evidence type="ECO:0007744" key="9">
    <source>
    </source>
</evidence>
<reference key="1">
    <citation type="journal article" date="2005" name="Science">
        <title>The transcriptional landscape of the mammalian genome.</title>
        <authorList>
            <person name="Carninci P."/>
            <person name="Kasukawa T."/>
            <person name="Katayama S."/>
            <person name="Gough J."/>
            <person name="Frith M.C."/>
            <person name="Maeda N."/>
            <person name="Oyama R."/>
            <person name="Ravasi T."/>
            <person name="Lenhard B."/>
            <person name="Wells C."/>
            <person name="Kodzius R."/>
            <person name="Shimokawa K."/>
            <person name="Bajic V.B."/>
            <person name="Brenner S.E."/>
            <person name="Batalov S."/>
            <person name="Forrest A.R."/>
            <person name="Zavolan M."/>
            <person name="Davis M.J."/>
            <person name="Wilming L.G."/>
            <person name="Aidinis V."/>
            <person name="Allen J.E."/>
            <person name="Ambesi-Impiombato A."/>
            <person name="Apweiler R."/>
            <person name="Aturaliya R.N."/>
            <person name="Bailey T.L."/>
            <person name="Bansal M."/>
            <person name="Baxter L."/>
            <person name="Beisel K.W."/>
            <person name="Bersano T."/>
            <person name="Bono H."/>
            <person name="Chalk A.M."/>
            <person name="Chiu K.P."/>
            <person name="Choudhary V."/>
            <person name="Christoffels A."/>
            <person name="Clutterbuck D.R."/>
            <person name="Crowe M.L."/>
            <person name="Dalla E."/>
            <person name="Dalrymple B.P."/>
            <person name="de Bono B."/>
            <person name="Della Gatta G."/>
            <person name="di Bernardo D."/>
            <person name="Down T."/>
            <person name="Engstrom P."/>
            <person name="Fagiolini M."/>
            <person name="Faulkner G."/>
            <person name="Fletcher C.F."/>
            <person name="Fukushima T."/>
            <person name="Furuno M."/>
            <person name="Futaki S."/>
            <person name="Gariboldi M."/>
            <person name="Georgii-Hemming P."/>
            <person name="Gingeras T.R."/>
            <person name="Gojobori T."/>
            <person name="Green R.E."/>
            <person name="Gustincich S."/>
            <person name="Harbers M."/>
            <person name="Hayashi Y."/>
            <person name="Hensch T.K."/>
            <person name="Hirokawa N."/>
            <person name="Hill D."/>
            <person name="Huminiecki L."/>
            <person name="Iacono M."/>
            <person name="Ikeo K."/>
            <person name="Iwama A."/>
            <person name="Ishikawa T."/>
            <person name="Jakt M."/>
            <person name="Kanapin A."/>
            <person name="Katoh M."/>
            <person name="Kawasawa Y."/>
            <person name="Kelso J."/>
            <person name="Kitamura H."/>
            <person name="Kitano H."/>
            <person name="Kollias G."/>
            <person name="Krishnan S.P."/>
            <person name="Kruger A."/>
            <person name="Kummerfeld S.K."/>
            <person name="Kurochkin I.V."/>
            <person name="Lareau L.F."/>
            <person name="Lazarevic D."/>
            <person name="Lipovich L."/>
            <person name="Liu J."/>
            <person name="Liuni S."/>
            <person name="McWilliam S."/>
            <person name="Madan Babu M."/>
            <person name="Madera M."/>
            <person name="Marchionni L."/>
            <person name="Matsuda H."/>
            <person name="Matsuzawa S."/>
            <person name="Miki H."/>
            <person name="Mignone F."/>
            <person name="Miyake S."/>
            <person name="Morris K."/>
            <person name="Mottagui-Tabar S."/>
            <person name="Mulder N."/>
            <person name="Nakano N."/>
            <person name="Nakauchi H."/>
            <person name="Ng P."/>
            <person name="Nilsson R."/>
            <person name="Nishiguchi S."/>
            <person name="Nishikawa S."/>
            <person name="Nori F."/>
            <person name="Ohara O."/>
            <person name="Okazaki Y."/>
            <person name="Orlando V."/>
            <person name="Pang K.C."/>
            <person name="Pavan W.J."/>
            <person name="Pavesi G."/>
            <person name="Pesole G."/>
            <person name="Petrovsky N."/>
            <person name="Piazza S."/>
            <person name="Reed J."/>
            <person name="Reid J.F."/>
            <person name="Ring B.Z."/>
            <person name="Ringwald M."/>
            <person name="Rost B."/>
            <person name="Ruan Y."/>
            <person name="Salzberg S.L."/>
            <person name="Sandelin A."/>
            <person name="Schneider C."/>
            <person name="Schoenbach C."/>
            <person name="Sekiguchi K."/>
            <person name="Semple C.A."/>
            <person name="Seno S."/>
            <person name="Sessa L."/>
            <person name="Sheng Y."/>
            <person name="Shibata Y."/>
            <person name="Shimada H."/>
            <person name="Shimada K."/>
            <person name="Silva D."/>
            <person name="Sinclair B."/>
            <person name="Sperling S."/>
            <person name="Stupka E."/>
            <person name="Sugiura K."/>
            <person name="Sultana R."/>
            <person name="Takenaka Y."/>
            <person name="Taki K."/>
            <person name="Tammoja K."/>
            <person name="Tan S.L."/>
            <person name="Tang S."/>
            <person name="Taylor M.S."/>
            <person name="Tegner J."/>
            <person name="Teichmann S.A."/>
            <person name="Ueda H.R."/>
            <person name="van Nimwegen E."/>
            <person name="Verardo R."/>
            <person name="Wei C.L."/>
            <person name="Yagi K."/>
            <person name="Yamanishi H."/>
            <person name="Zabarovsky E."/>
            <person name="Zhu S."/>
            <person name="Zimmer A."/>
            <person name="Hide W."/>
            <person name="Bult C."/>
            <person name="Grimmond S.M."/>
            <person name="Teasdale R.D."/>
            <person name="Liu E.T."/>
            <person name="Brusic V."/>
            <person name="Quackenbush J."/>
            <person name="Wahlestedt C."/>
            <person name="Mattick J.S."/>
            <person name="Hume D.A."/>
            <person name="Kai C."/>
            <person name="Sasaki D."/>
            <person name="Tomaru Y."/>
            <person name="Fukuda S."/>
            <person name="Kanamori-Katayama M."/>
            <person name="Suzuki M."/>
            <person name="Aoki J."/>
            <person name="Arakawa T."/>
            <person name="Iida J."/>
            <person name="Imamura K."/>
            <person name="Itoh M."/>
            <person name="Kato T."/>
            <person name="Kawaji H."/>
            <person name="Kawagashira N."/>
            <person name="Kawashima T."/>
            <person name="Kojima M."/>
            <person name="Kondo S."/>
            <person name="Konno H."/>
            <person name="Nakano K."/>
            <person name="Ninomiya N."/>
            <person name="Nishio T."/>
            <person name="Okada M."/>
            <person name="Plessy C."/>
            <person name="Shibata K."/>
            <person name="Shiraki T."/>
            <person name="Suzuki S."/>
            <person name="Tagami M."/>
            <person name="Waki K."/>
            <person name="Watahiki A."/>
            <person name="Okamura-Oho Y."/>
            <person name="Suzuki H."/>
            <person name="Kawai J."/>
            <person name="Hayashizaki Y."/>
        </authorList>
    </citation>
    <scope>NUCLEOTIDE SEQUENCE [LARGE SCALE MRNA] (ISOFORM 2)</scope>
    <source>
        <strain>C57BL/6J</strain>
        <tissue>Testis</tissue>
        <tissue>Thymus</tissue>
        <tissue>Wolffian duct</tissue>
    </source>
</reference>
<reference key="2">
    <citation type="journal article" date="2004" name="Genome Res.">
        <title>The status, quality, and expansion of the NIH full-length cDNA project: the Mammalian Gene Collection (MGC).</title>
        <authorList>
            <consortium name="The MGC Project Team"/>
        </authorList>
    </citation>
    <scope>NUCLEOTIDE SEQUENCE [LARGE SCALE MRNA] (ISOFORM 2)</scope>
    <source>
        <strain>Czech II</strain>
        <tissue>Mammary tumor</tissue>
    </source>
</reference>
<reference key="3">
    <citation type="journal article" date="2009" name="PLoS Biol.">
        <title>Lineage-specific biology revealed by a finished genome assembly of the mouse.</title>
        <authorList>
            <person name="Church D.M."/>
            <person name="Goodstadt L."/>
            <person name="Hillier L.W."/>
            <person name="Zody M.C."/>
            <person name="Goldstein S."/>
            <person name="She X."/>
            <person name="Bult C.J."/>
            <person name="Agarwala R."/>
            <person name="Cherry J.L."/>
            <person name="DiCuccio M."/>
            <person name="Hlavina W."/>
            <person name="Kapustin Y."/>
            <person name="Meric P."/>
            <person name="Maglott D."/>
            <person name="Birtle Z."/>
            <person name="Marques A.C."/>
            <person name="Graves T."/>
            <person name="Zhou S."/>
            <person name="Teague B."/>
            <person name="Potamousis K."/>
            <person name="Churas C."/>
            <person name="Place M."/>
            <person name="Herschleb J."/>
            <person name="Runnheim R."/>
            <person name="Forrest D."/>
            <person name="Amos-Landgraf J."/>
            <person name="Schwartz D.C."/>
            <person name="Cheng Z."/>
            <person name="Lindblad-Toh K."/>
            <person name="Eichler E.E."/>
            <person name="Ponting C.P."/>
        </authorList>
    </citation>
    <scope>NUCLEOTIDE SEQUENCE [LARGE SCALE GENOMIC DNA]</scope>
    <source>
        <strain>C57BL/6J</strain>
    </source>
</reference>
<reference key="4">
    <citation type="journal article" date="2004" name="DNA Res.">
        <title>Prediction of the coding sequences of mouse homologues of FLJ genes: the complete nucleotide sequences of 110 mouse FLJ-homologous cDNAs identified by screening of terminal sequences of cDNA clones randomly sampled from size-fractionated libraries.</title>
        <authorList>
            <person name="Okazaki N."/>
            <person name="Kikuno R."/>
            <person name="Ohara R."/>
            <person name="Inamoto S."/>
            <person name="Koseki H."/>
            <person name="Hiraoka S."/>
            <person name="Saga Y."/>
            <person name="Kitamura H."/>
            <person name="Nakagawa T."/>
            <person name="Nagase T."/>
            <person name="Ohara O."/>
            <person name="Koga H."/>
        </authorList>
    </citation>
    <scope>NUCLEOTIDE SEQUENCE [LARGE SCALE MRNA] OF 1160-2334 (ISOFORM 1)</scope>
    <source>
        <tissue>Fetal brain</tissue>
    </source>
</reference>
<reference key="5">
    <citation type="journal article" date="2000" name="Blood">
        <title>FGFR1 is fused to the centrosome-associated protein CEP110 in the 8p12 stem cell myeloproliferative disorder with t(8;9)(p12;q33).</title>
        <authorList>
            <person name="Guasch G."/>
            <person name="Mack G.J."/>
            <person name="Popovici C."/>
            <person name="Dastugue N."/>
            <person name="Birnbaum D."/>
            <person name="Rattner J.B."/>
            <person name="Pebusque M.-J."/>
        </authorList>
    </citation>
    <scope>TISSUE SPECIFICITY</scope>
</reference>
<reference key="6">
    <citation type="journal article" date="2010" name="Cell">
        <title>A tissue-specific atlas of mouse protein phosphorylation and expression.</title>
        <authorList>
            <person name="Huttlin E.L."/>
            <person name="Jedrychowski M.P."/>
            <person name="Elias J.E."/>
            <person name="Goswami T."/>
            <person name="Rad R."/>
            <person name="Beausoleil S.A."/>
            <person name="Villen J."/>
            <person name="Haas W."/>
            <person name="Sowa M.E."/>
            <person name="Gygi S.P."/>
        </authorList>
    </citation>
    <scope>PHOSPHORYLATION [LARGE SCALE ANALYSIS] AT SER-832</scope>
    <scope>IDENTIFICATION BY MASS SPECTROMETRY [LARGE SCALE ANALYSIS]</scope>
    <source>
        <tissue>Lung</tissue>
        <tissue>Spleen</tissue>
        <tissue>Testis</tissue>
    </source>
</reference>
<comment type="function">
    <text evidence="1">Involved in cell cycle progression and cytokinesis. During the late steps of cytokinesis, anchors exocyst and SNARE complexes at the midbody, thereby allowing secretory vesicle-mediated abscission (By similarity).</text>
</comment>
<comment type="subunit">
    <text evidence="1">Interacts with HOOK2. Interacts with EXOC6 and SNAPIN. Associates with the exocyst complex (By similarity).</text>
</comment>
<comment type="subcellular location">
    <subcellularLocation>
        <location evidence="2">Cytoplasm</location>
        <location evidence="2">Cytoskeleton</location>
        <location evidence="2">Microtubule organizing center</location>
        <location evidence="2">Centrosome</location>
    </subcellularLocation>
    <subcellularLocation>
        <location evidence="2">Midbody</location>
        <location evidence="2">Midbody ring</location>
    </subcellularLocation>
</comment>
<comment type="alternative products">
    <event type="alternative splicing"/>
    <isoform>
        <id>A2AL36-1</id>
        <name>1</name>
        <sequence type="displayed"/>
    </isoform>
    <isoform>
        <id>A2AL36-2</id>
        <name>2</name>
        <sequence type="described" ref="VSP_032051 VSP_032052"/>
    </isoform>
</comment>
<comment type="tissue specificity">
    <text evidence="5">Highly expressed in liver.</text>
</comment>
<comment type="sequence caution" evidence="8">
    <conflict type="erroneous gene model prediction">
        <sequence resource="EMBL-CDS" id="CAM17906"/>
    </conflict>
</comment>
<comment type="sequence caution" evidence="8">
    <conflict type="erroneous gene model prediction">
        <sequence resource="EMBL-CDS" id="CAM17908"/>
    </conflict>
</comment>